<accession>O69475</accession>
<reference key="1">
    <citation type="journal article" date="2001" name="Nature">
        <title>Massive gene decay in the leprosy bacillus.</title>
        <authorList>
            <person name="Cole S.T."/>
            <person name="Eiglmeier K."/>
            <person name="Parkhill J."/>
            <person name="James K.D."/>
            <person name="Thomson N.R."/>
            <person name="Wheeler P.R."/>
            <person name="Honore N."/>
            <person name="Garnier T."/>
            <person name="Churcher C.M."/>
            <person name="Harris D.E."/>
            <person name="Mungall K.L."/>
            <person name="Basham D."/>
            <person name="Brown D."/>
            <person name="Chillingworth T."/>
            <person name="Connor R."/>
            <person name="Davies R.M."/>
            <person name="Devlin K."/>
            <person name="Duthoy S."/>
            <person name="Feltwell T."/>
            <person name="Fraser A."/>
            <person name="Hamlin N."/>
            <person name="Holroyd S."/>
            <person name="Hornsby T."/>
            <person name="Jagels K."/>
            <person name="Lacroix C."/>
            <person name="Maclean J."/>
            <person name="Moule S."/>
            <person name="Murphy L.D."/>
            <person name="Oliver K."/>
            <person name="Quail M.A."/>
            <person name="Rajandream M.A."/>
            <person name="Rutherford K.M."/>
            <person name="Rutter S."/>
            <person name="Seeger K."/>
            <person name="Simon S."/>
            <person name="Simmonds M."/>
            <person name="Skelton J."/>
            <person name="Squares R."/>
            <person name="Squares S."/>
            <person name="Stevens K."/>
            <person name="Taylor K."/>
            <person name="Whitehead S."/>
            <person name="Woodward J.R."/>
            <person name="Barrell B.G."/>
        </authorList>
    </citation>
    <scope>NUCLEOTIDE SEQUENCE [LARGE SCALE GENOMIC DNA]</scope>
    <source>
        <strain>TN</strain>
    </source>
</reference>
<sequence>MAVTQEEIIAGIAEIIEEVTGIEPSEITPEKSFVDDLDIDSLSMVEIAVQTEDKYGVKIPDEDLAGLRTVGDVVTYIQKLEEENPEAAEALRAKIVSENPEAAANVQARLETESK</sequence>
<gene>
    <name type="primary">acpM</name>
    <name type="ordered locus">ML1654</name>
    <name type="ORF">MLCB1243.21c</name>
</gene>
<organism>
    <name type="scientific">Mycobacterium leprae (strain TN)</name>
    <dbReference type="NCBI Taxonomy" id="272631"/>
    <lineage>
        <taxon>Bacteria</taxon>
        <taxon>Bacillati</taxon>
        <taxon>Actinomycetota</taxon>
        <taxon>Actinomycetes</taxon>
        <taxon>Mycobacteriales</taxon>
        <taxon>Mycobacteriaceae</taxon>
        <taxon>Mycobacterium</taxon>
    </lineage>
</organism>
<comment type="function">
    <text>Acyl carrier protein involved in meromycolate extension.</text>
</comment>
<comment type="subcellular location">
    <subcellularLocation>
        <location evidence="1">Cytoplasm</location>
    </subcellularLocation>
</comment>
<comment type="PTM">
    <text evidence="3">4'-phosphopantetheine is transferred from CoA to a specific serine of apo-AcpM.</text>
</comment>
<comment type="similarity">
    <text evidence="3">Belongs to the acyl carrier protein (ACP) family.</text>
</comment>
<protein>
    <recommendedName>
        <fullName>Meromycolate extension acyl carrier protein</fullName>
        <shortName>ACP</shortName>
    </recommendedName>
</protein>
<dbReference type="EMBL" id="AL023635">
    <property type="protein sequence ID" value="CAA19202.1"/>
    <property type="molecule type" value="Genomic_DNA"/>
</dbReference>
<dbReference type="EMBL" id="AL583922">
    <property type="protein sequence ID" value="CAC30605.1"/>
    <property type="molecule type" value="Genomic_DNA"/>
</dbReference>
<dbReference type="PIR" id="T44712">
    <property type="entry name" value="T44712"/>
</dbReference>
<dbReference type="RefSeq" id="NP_302135.1">
    <property type="nucleotide sequence ID" value="NC_002677.1"/>
</dbReference>
<dbReference type="RefSeq" id="WP_010908456.1">
    <property type="nucleotide sequence ID" value="NC_002677.1"/>
</dbReference>
<dbReference type="SMR" id="O69475"/>
<dbReference type="STRING" id="272631.gene:17575497"/>
<dbReference type="KEGG" id="mle:ML1654"/>
<dbReference type="PATRIC" id="fig|272631.5.peg.3121"/>
<dbReference type="Leproma" id="ML1654"/>
<dbReference type="eggNOG" id="COG0236">
    <property type="taxonomic scope" value="Bacteria"/>
</dbReference>
<dbReference type="HOGENOM" id="CLU_108696_5_6_11"/>
<dbReference type="OrthoDB" id="9804551at2"/>
<dbReference type="Proteomes" id="UP000000806">
    <property type="component" value="Chromosome"/>
</dbReference>
<dbReference type="GO" id="GO:0005829">
    <property type="term" value="C:cytosol"/>
    <property type="evidence" value="ECO:0007669"/>
    <property type="project" value="TreeGrafter"/>
</dbReference>
<dbReference type="GO" id="GO:0016020">
    <property type="term" value="C:membrane"/>
    <property type="evidence" value="ECO:0007669"/>
    <property type="project" value="GOC"/>
</dbReference>
<dbReference type="GO" id="GO:0000035">
    <property type="term" value="F:acyl binding"/>
    <property type="evidence" value="ECO:0007669"/>
    <property type="project" value="TreeGrafter"/>
</dbReference>
<dbReference type="GO" id="GO:0000036">
    <property type="term" value="F:acyl carrier activity"/>
    <property type="evidence" value="ECO:0007669"/>
    <property type="project" value="UniProtKB-UniRule"/>
</dbReference>
<dbReference type="GO" id="GO:0009245">
    <property type="term" value="P:lipid A biosynthetic process"/>
    <property type="evidence" value="ECO:0007669"/>
    <property type="project" value="TreeGrafter"/>
</dbReference>
<dbReference type="FunFam" id="1.10.1200.10:FF:000010">
    <property type="entry name" value="Acyl carrier protein"/>
    <property type="match status" value="1"/>
</dbReference>
<dbReference type="Gene3D" id="1.10.1200.10">
    <property type="entry name" value="ACP-like"/>
    <property type="match status" value="1"/>
</dbReference>
<dbReference type="HAMAP" id="MF_01217">
    <property type="entry name" value="Acyl_carrier"/>
    <property type="match status" value="1"/>
</dbReference>
<dbReference type="InterPro" id="IPR003231">
    <property type="entry name" value="ACP"/>
</dbReference>
<dbReference type="InterPro" id="IPR036736">
    <property type="entry name" value="ACP-like_sf"/>
</dbReference>
<dbReference type="InterPro" id="IPR053393">
    <property type="entry name" value="Meromycolate-ACP"/>
</dbReference>
<dbReference type="InterPro" id="IPR009081">
    <property type="entry name" value="PP-bd_ACP"/>
</dbReference>
<dbReference type="NCBIfam" id="NF040636">
    <property type="entry name" value="AcpM"/>
    <property type="match status" value="1"/>
</dbReference>
<dbReference type="NCBIfam" id="NF002147">
    <property type="entry name" value="PRK00982.1-1"/>
    <property type="match status" value="1"/>
</dbReference>
<dbReference type="NCBIfam" id="NF002148">
    <property type="entry name" value="PRK00982.1-2"/>
    <property type="match status" value="1"/>
</dbReference>
<dbReference type="NCBIfam" id="NF002150">
    <property type="entry name" value="PRK00982.1-4"/>
    <property type="match status" value="1"/>
</dbReference>
<dbReference type="PANTHER" id="PTHR20863">
    <property type="entry name" value="ACYL CARRIER PROTEIN"/>
    <property type="match status" value="1"/>
</dbReference>
<dbReference type="PANTHER" id="PTHR20863:SF76">
    <property type="entry name" value="CARRIER DOMAIN-CONTAINING PROTEIN"/>
    <property type="match status" value="1"/>
</dbReference>
<dbReference type="Pfam" id="PF00550">
    <property type="entry name" value="PP-binding"/>
    <property type="match status" value="1"/>
</dbReference>
<dbReference type="SUPFAM" id="SSF47336">
    <property type="entry name" value="ACP-like"/>
    <property type="match status" value="1"/>
</dbReference>
<dbReference type="PROSITE" id="PS50075">
    <property type="entry name" value="CARRIER"/>
    <property type="match status" value="1"/>
</dbReference>
<proteinExistence type="inferred from homology"/>
<evidence type="ECO:0000250" key="1"/>
<evidence type="ECO:0000255" key="2">
    <source>
        <dbReference type="PROSITE-ProRule" id="PRU00258"/>
    </source>
</evidence>
<evidence type="ECO:0000305" key="3"/>
<keyword id="KW-0963">Cytoplasm</keyword>
<keyword id="KW-0275">Fatty acid biosynthesis</keyword>
<keyword id="KW-0276">Fatty acid metabolism</keyword>
<keyword id="KW-0444">Lipid biosynthesis</keyword>
<keyword id="KW-0443">Lipid metabolism</keyword>
<keyword id="KW-0596">Phosphopantetheine</keyword>
<keyword id="KW-0597">Phosphoprotein</keyword>
<keyword id="KW-1185">Reference proteome</keyword>
<name>ACPM_MYCLE</name>
<feature type="chain" id="PRO_0000180244" description="Meromycolate extension acyl carrier protein">
    <location>
        <begin position="1"/>
        <end position="115"/>
    </location>
</feature>
<feature type="domain" description="Carrier" evidence="2">
    <location>
        <begin position="3"/>
        <end position="81"/>
    </location>
</feature>
<feature type="modified residue" description="O-(pantetheine 4'-phosphoryl)serine" evidence="2">
    <location>
        <position position="41"/>
    </location>
</feature>